<evidence type="ECO:0000250" key="1"/>
<evidence type="ECO:0000255" key="2"/>
<evidence type="ECO:0000305" key="3"/>
<organism>
    <name type="scientific">Zea mays</name>
    <name type="common">Maize</name>
    <dbReference type="NCBI Taxonomy" id="4577"/>
    <lineage>
        <taxon>Eukaryota</taxon>
        <taxon>Viridiplantae</taxon>
        <taxon>Streptophyta</taxon>
        <taxon>Embryophyta</taxon>
        <taxon>Tracheophyta</taxon>
        <taxon>Spermatophyta</taxon>
        <taxon>Magnoliopsida</taxon>
        <taxon>Liliopsida</taxon>
        <taxon>Poales</taxon>
        <taxon>Poaceae</taxon>
        <taxon>PACMAD clade</taxon>
        <taxon>Panicoideae</taxon>
        <taxon>Andropogonodae</taxon>
        <taxon>Andropogoneae</taxon>
        <taxon>Tripsacinae</taxon>
        <taxon>Zea</taxon>
    </lineage>
</organism>
<proteinExistence type="inferred from homology"/>
<dbReference type="EC" id="7.1.1.-"/>
<dbReference type="EMBL" id="X86563">
    <property type="protein sequence ID" value="CAA60351.1"/>
    <property type="molecule type" value="Genomic_DNA"/>
</dbReference>
<dbReference type="PIR" id="S58618">
    <property type="entry name" value="S58618"/>
</dbReference>
<dbReference type="RefSeq" id="NP_043090.1">
    <property type="nucleotide sequence ID" value="NC_001666.2"/>
</dbReference>
<dbReference type="SMR" id="P46621"/>
<dbReference type="FunCoup" id="P46621">
    <property type="interactions" value="14"/>
</dbReference>
<dbReference type="STRING" id="4577.P46621"/>
<dbReference type="PaxDb" id="4577-GRMZM5G864407_P01"/>
<dbReference type="GeneID" id="845186"/>
<dbReference type="KEGG" id="zma:845186"/>
<dbReference type="MaizeGDB" id="120725"/>
<dbReference type="eggNOG" id="ENOG502QQHR">
    <property type="taxonomic scope" value="Eukaryota"/>
</dbReference>
<dbReference type="HOGENOM" id="CLU_085957_3_0_1"/>
<dbReference type="InParanoid" id="P46621"/>
<dbReference type="OMA" id="TSWYGVI"/>
<dbReference type="OrthoDB" id="655704at2759"/>
<dbReference type="Proteomes" id="UP000007305">
    <property type="component" value="Chloroplast"/>
</dbReference>
<dbReference type="GO" id="GO:0009535">
    <property type="term" value="C:chloroplast thylakoid membrane"/>
    <property type="evidence" value="ECO:0007669"/>
    <property type="project" value="UniProtKB-SubCell"/>
</dbReference>
<dbReference type="GO" id="GO:0008137">
    <property type="term" value="F:NADH dehydrogenase (ubiquinone) activity"/>
    <property type="evidence" value="ECO:0007669"/>
    <property type="project" value="InterPro"/>
</dbReference>
<dbReference type="GO" id="GO:0048038">
    <property type="term" value="F:quinone binding"/>
    <property type="evidence" value="ECO:0007669"/>
    <property type="project" value="UniProtKB-KW"/>
</dbReference>
<dbReference type="FunFam" id="1.20.120.1200:FF:000002">
    <property type="entry name" value="NAD(P)H-quinone oxidoreductase subunit 6, chloroplastic"/>
    <property type="match status" value="1"/>
</dbReference>
<dbReference type="Gene3D" id="1.20.120.1200">
    <property type="entry name" value="NADH-ubiquinone/plastoquinone oxidoreductase chain 6, subunit NuoJ"/>
    <property type="match status" value="1"/>
</dbReference>
<dbReference type="InterPro" id="IPR050290">
    <property type="entry name" value="NAD(P)H-Q_Oxidoreduct_6"/>
</dbReference>
<dbReference type="InterPro" id="IPR001457">
    <property type="entry name" value="NADH_UbQ/plastoQ_OxRdtase_su6"/>
</dbReference>
<dbReference type="InterPro" id="IPR042106">
    <property type="entry name" value="Nuo/plastoQ_OxRdtase_6_NuoJ"/>
</dbReference>
<dbReference type="PANTHER" id="PTHR48479">
    <property type="entry name" value="NAD(P)H-QUINONE OXIDOREDUCTASE SUBUNIT 6, CHLOROPLASTIC"/>
    <property type="match status" value="1"/>
</dbReference>
<dbReference type="PANTHER" id="PTHR48479:SF1">
    <property type="entry name" value="NAD(P)H-QUINONE OXIDOREDUCTASE SUBUNIT 6, CHLOROPLASTIC"/>
    <property type="match status" value="1"/>
</dbReference>
<dbReference type="Pfam" id="PF00499">
    <property type="entry name" value="Oxidored_q3"/>
    <property type="match status" value="1"/>
</dbReference>
<feature type="chain" id="PRO_0000118355" description="NAD(P)H-quinone oxidoreductase subunit 6, chloroplastic">
    <location>
        <begin position="1"/>
        <end position="176"/>
    </location>
</feature>
<feature type="transmembrane region" description="Helical" evidence="2">
    <location>
        <begin position="10"/>
        <end position="30"/>
    </location>
</feature>
<feature type="transmembrane region" description="Helical" evidence="2">
    <location>
        <begin position="33"/>
        <end position="53"/>
    </location>
</feature>
<feature type="transmembrane region" description="Helical" evidence="2">
    <location>
        <begin position="60"/>
        <end position="80"/>
    </location>
</feature>
<feature type="transmembrane region" description="Helical" evidence="2">
    <location>
        <begin position="95"/>
        <end position="115"/>
    </location>
</feature>
<feature type="transmembrane region" description="Helical" evidence="2">
    <location>
        <begin position="152"/>
        <end position="172"/>
    </location>
</feature>
<accession>P46621</accession>
<geneLocation type="chloroplast"/>
<protein>
    <recommendedName>
        <fullName>NAD(P)H-quinone oxidoreductase subunit 6, chloroplastic</fullName>
        <ecNumber>7.1.1.-</ecNumber>
    </recommendedName>
    <alternativeName>
        <fullName>NAD(P)H dehydrogenase subunit 6</fullName>
    </alternativeName>
    <alternativeName>
        <fullName>NADH-plastoquinone oxidoreductase subunit 6</fullName>
    </alternativeName>
</protein>
<keyword id="KW-0150">Chloroplast</keyword>
<keyword id="KW-0472">Membrane</keyword>
<keyword id="KW-0520">NAD</keyword>
<keyword id="KW-0521">NADP</keyword>
<keyword id="KW-0934">Plastid</keyword>
<keyword id="KW-0618">Plastoquinone</keyword>
<keyword id="KW-0874">Quinone</keyword>
<keyword id="KW-1185">Reference proteome</keyword>
<keyword id="KW-0793">Thylakoid</keyword>
<keyword id="KW-1278">Translocase</keyword>
<keyword id="KW-0812">Transmembrane</keyword>
<keyword id="KW-1133">Transmembrane helix</keyword>
<keyword id="KW-0813">Transport</keyword>
<sequence>MDLPGPIHEILVLFGGFGLLLGGLGVVLLTNPIYSAFSLGLVLVCISLFYFLLNSYFVAVAQLLIYVGAINVLIIFAVMFVNGSEWSKDKNYWTIGDGFTLLLCITIPFSLMTTIPDTSWYGILWTTRSNQIVEQGLINNVQQIGIHLATDFYLPFELISLILLVSLIGAITMARQ</sequence>
<reference key="1">
    <citation type="journal article" date="1995" name="J. Mol. Biol.">
        <title>Complete sequence of the maize chloroplast genome: gene content, hotspots of divergence and fine tuning of genetic information by transcript editing.</title>
        <authorList>
            <person name="Maier R.M."/>
            <person name="Neckermann K."/>
            <person name="Igloi G.L."/>
            <person name="Koessel H."/>
        </authorList>
    </citation>
    <scope>NUCLEOTIDE SEQUENCE [LARGE SCALE GENOMIC DNA]</scope>
    <source>
        <strain>cv. B73</strain>
    </source>
</reference>
<name>NU6C_MAIZE</name>
<gene>
    <name type="primary">ndhG</name>
    <name type="synonym">ndh6</name>
</gene>
<comment type="function">
    <text evidence="1">NDH shuttles electrons from NAD(P)H:plastoquinone, via FMN and iron-sulfur (Fe-S) centers, to quinones in the photosynthetic chain and possibly in a chloroplast respiratory chain. The immediate electron acceptor for the enzyme in this species is believed to be plastoquinone. Couples the redox reaction to proton translocation, and thus conserves the redox energy in a proton gradient (By similarity).</text>
</comment>
<comment type="catalytic activity">
    <reaction>
        <text>a plastoquinone + NADH + (n+1) H(+)(in) = a plastoquinol + NAD(+) + n H(+)(out)</text>
        <dbReference type="Rhea" id="RHEA:42608"/>
        <dbReference type="Rhea" id="RHEA-COMP:9561"/>
        <dbReference type="Rhea" id="RHEA-COMP:9562"/>
        <dbReference type="ChEBI" id="CHEBI:15378"/>
        <dbReference type="ChEBI" id="CHEBI:17757"/>
        <dbReference type="ChEBI" id="CHEBI:57540"/>
        <dbReference type="ChEBI" id="CHEBI:57945"/>
        <dbReference type="ChEBI" id="CHEBI:62192"/>
    </reaction>
</comment>
<comment type="catalytic activity">
    <reaction>
        <text>a plastoquinone + NADPH + (n+1) H(+)(in) = a plastoquinol + NADP(+) + n H(+)(out)</text>
        <dbReference type="Rhea" id="RHEA:42612"/>
        <dbReference type="Rhea" id="RHEA-COMP:9561"/>
        <dbReference type="Rhea" id="RHEA-COMP:9562"/>
        <dbReference type="ChEBI" id="CHEBI:15378"/>
        <dbReference type="ChEBI" id="CHEBI:17757"/>
        <dbReference type="ChEBI" id="CHEBI:57783"/>
        <dbReference type="ChEBI" id="CHEBI:58349"/>
        <dbReference type="ChEBI" id="CHEBI:62192"/>
    </reaction>
</comment>
<comment type="subunit">
    <text evidence="1">NDH is composed of at least 16 different subunits, 5 of which are encoded in the nucleus.</text>
</comment>
<comment type="subcellular location">
    <subcellularLocation>
        <location evidence="1">Plastid</location>
        <location evidence="1">Chloroplast thylakoid membrane</location>
        <topology evidence="1">Multi-pass membrane protein</topology>
    </subcellularLocation>
</comment>
<comment type="similarity">
    <text evidence="3">Belongs to the complex I subunit 6 family.</text>
</comment>